<keyword id="KW-0028">Amino-acid biosynthesis</keyword>
<keyword id="KW-0378">Hydrolase</keyword>
<keyword id="KW-0486">Methionine biosynthesis</keyword>
<sequence length="232" mass="24300">MKIGIIGAMEEEVTLLRDKIENCQTLSLGGCEIYTGQLNGTDVALLKSGIGKVAAALGATLLLERCKPDVIINTGSAGGLAPSLKVGDIVVSDEARYHDADVTAFGYEYGQLPGCPAGFKADDNLIAAAESCIAELNLNAVRGLIVSGDAFINGSVGLAKIRHNFPNAIAVEMEATAIAHVCHNFSVPFVVVRAISDVADQQSHLSFDEFLAVAAKQSTIMVETLVQKLARG</sequence>
<reference key="1">
    <citation type="journal article" date="2010" name="PLoS Genet.">
        <title>Genome sequence of the plant growth promoting endophytic bacterium Enterobacter sp. 638.</title>
        <authorList>
            <person name="Taghavi S."/>
            <person name="van der Lelie D."/>
            <person name="Hoffman A."/>
            <person name="Zhang Y.B."/>
            <person name="Walla M.D."/>
            <person name="Vangronsveld J."/>
            <person name="Newman L."/>
            <person name="Monchy S."/>
        </authorList>
    </citation>
    <scope>NUCLEOTIDE SEQUENCE [LARGE SCALE GENOMIC DNA]</scope>
    <source>
        <strain>638</strain>
    </source>
</reference>
<organism>
    <name type="scientific">Enterobacter sp. (strain 638)</name>
    <dbReference type="NCBI Taxonomy" id="399742"/>
    <lineage>
        <taxon>Bacteria</taxon>
        <taxon>Pseudomonadati</taxon>
        <taxon>Pseudomonadota</taxon>
        <taxon>Gammaproteobacteria</taxon>
        <taxon>Enterobacterales</taxon>
        <taxon>Enterobacteriaceae</taxon>
        <taxon>Enterobacter</taxon>
    </lineage>
</organism>
<comment type="function">
    <text evidence="1">Catalyzes the irreversible cleavage of the glycosidic bond in both 5'-methylthioadenosine (MTA) and S-adenosylhomocysteine (SAH/AdoHcy) to adenine and the corresponding thioribose, 5'-methylthioribose and S-ribosylhomocysteine, respectively. Also cleaves 5'-deoxyadenosine, a toxic by-product of radical S-adenosylmethionine (SAM) enzymes, into 5-deoxyribose and adenine. Thus, is required for in vivo function of the radical SAM enzymes biotin synthase and lipoic acid synthase, that are inhibited by 5'-deoxyadenosine accumulation.</text>
</comment>
<comment type="catalytic activity">
    <reaction evidence="1">
        <text>S-adenosyl-L-homocysteine + H2O = S-(5-deoxy-D-ribos-5-yl)-L-homocysteine + adenine</text>
        <dbReference type="Rhea" id="RHEA:17805"/>
        <dbReference type="ChEBI" id="CHEBI:15377"/>
        <dbReference type="ChEBI" id="CHEBI:16708"/>
        <dbReference type="ChEBI" id="CHEBI:57856"/>
        <dbReference type="ChEBI" id="CHEBI:58195"/>
        <dbReference type="EC" id="3.2.2.9"/>
    </reaction>
</comment>
<comment type="catalytic activity">
    <reaction evidence="1">
        <text>S-methyl-5'-thioadenosine + H2O = 5-(methylsulfanyl)-D-ribose + adenine</text>
        <dbReference type="Rhea" id="RHEA:13617"/>
        <dbReference type="ChEBI" id="CHEBI:15377"/>
        <dbReference type="ChEBI" id="CHEBI:16708"/>
        <dbReference type="ChEBI" id="CHEBI:17509"/>
        <dbReference type="ChEBI" id="CHEBI:78440"/>
        <dbReference type="EC" id="3.2.2.9"/>
    </reaction>
</comment>
<comment type="catalytic activity">
    <reaction evidence="1">
        <text>5'-deoxyadenosine + H2O = 5-deoxy-D-ribose + adenine</text>
        <dbReference type="Rhea" id="RHEA:29859"/>
        <dbReference type="ChEBI" id="CHEBI:15377"/>
        <dbReference type="ChEBI" id="CHEBI:16708"/>
        <dbReference type="ChEBI" id="CHEBI:17319"/>
        <dbReference type="ChEBI" id="CHEBI:149540"/>
        <dbReference type="EC" id="3.2.2.9"/>
    </reaction>
    <physiologicalReaction direction="left-to-right" evidence="1">
        <dbReference type="Rhea" id="RHEA:29860"/>
    </physiologicalReaction>
</comment>
<comment type="pathway">
    <text evidence="1">Amino-acid biosynthesis; L-methionine biosynthesis via salvage pathway; S-methyl-5-thio-alpha-D-ribose 1-phosphate from S-methyl-5'-thioadenosine (hydrolase route): step 1/2.</text>
</comment>
<comment type="subunit">
    <text evidence="1">Homodimer.</text>
</comment>
<comment type="similarity">
    <text evidence="1">Belongs to the PNP/UDP phosphorylase family. MtnN subfamily.</text>
</comment>
<name>MTNN_ENT38</name>
<accession>A4W6Q6</accession>
<dbReference type="EC" id="3.2.2.9" evidence="1"/>
<dbReference type="EMBL" id="CP000653">
    <property type="protein sequence ID" value="ABP59386.1"/>
    <property type="molecule type" value="Genomic_DNA"/>
</dbReference>
<dbReference type="RefSeq" id="WP_012016107.1">
    <property type="nucleotide sequence ID" value="NC_009436.1"/>
</dbReference>
<dbReference type="SMR" id="A4W6Q6"/>
<dbReference type="STRING" id="399742.Ent638_0699"/>
<dbReference type="KEGG" id="ent:Ent638_0699"/>
<dbReference type="eggNOG" id="COG0775">
    <property type="taxonomic scope" value="Bacteria"/>
</dbReference>
<dbReference type="HOGENOM" id="CLU_031248_2_2_6"/>
<dbReference type="OrthoDB" id="9792278at2"/>
<dbReference type="UniPathway" id="UPA00904">
    <property type="reaction ID" value="UER00871"/>
</dbReference>
<dbReference type="Proteomes" id="UP000000230">
    <property type="component" value="Chromosome"/>
</dbReference>
<dbReference type="GO" id="GO:0005829">
    <property type="term" value="C:cytosol"/>
    <property type="evidence" value="ECO:0007669"/>
    <property type="project" value="TreeGrafter"/>
</dbReference>
<dbReference type="GO" id="GO:0008782">
    <property type="term" value="F:adenosylhomocysteine nucleosidase activity"/>
    <property type="evidence" value="ECO:0007669"/>
    <property type="project" value="UniProtKB-UniRule"/>
</dbReference>
<dbReference type="GO" id="GO:0008930">
    <property type="term" value="F:methylthioadenosine nucleosidase activity"/>
    <property type="evidence" value="ECO:0007669"/>
    <property type="project" value="UniProtKB-UniRule"/>
</dbReference>
<dbReference type="GO" id="GO:0019509">
    <property type="term" value="P:L-methionine salvage from methylthioadenosine"/>
    <property type="evidence" value="ECO:0007669"/>
    <property type="project" value="UniProtKB-UniRule"/>
</dbReference>
<dbReference type="GO" id="GO:0019284">
    <property type="term" value="P:L-methionine salvage from S-adenosylmethionine"/>
    <property type="evidence" value="ECO:0007669"/>
    <property type="project" value="TreeGrafter"/>
</dbReference>
<dbReference type="GO" id="GO:0046124">
    <property type="term" value="P:purine deoxyribonucleoside catabolic process"/>
    <property type="evidence" value="ECO:0007669"/>
    <property type="project" value="UniProtKB-UniRule"/>
</dbReference>
<dbReference type="CDD" id="cd09008">
    <property type="entry name" value="MTAN"/>
    <property type="match status" value="1"/>
</dbReference>
<dbReference type="FunFam" id="3.40.50.1580:FF:000001">
    <property type="entry name" value="MTA/SAH nucleosidase family protein"/>
    <property type="match status" value="1"/>
</dbReference>
<dbReference type="Gene3D" id="3.40.50.1580">
    <property type="entry name" value="Nucleoside phosphorylase domain"/>
    <property type="match status" value="1"/>
</dbReference>
<dbReference type="HAMAP" id="MF_01684">
    <property type="entry name" value="Salvage_MtnN"/>
    <property type="match status" value="1"/>
</dbReference>
<dbReference type="InterPro" id="IPR010049">
    <property type="entry name" value="MTA_SAH_Nsdase"/>
</dbReference>
<dbReference type="InterPro" id="IPR000845">
    <property type="entry name" value="Nucleoside_phosphorylase_d"/>
</dbReference>
<dbReference type="InterPro" id="IPR035994">
    <property type="entry name" value="Nucleoside_phosphorylase_sf"/>
</dbReference>
<dbReference type="NCBIfam" id="TIGR01704">
    <property type="entry name" value="MTA_SAH-Nsdase"/>
    <property type="match status" value="1"/>
</dbReference>
<dbReference type="NCBIfam" id="NF004079">
    <property type="entry name" value="PRK05584.1"/>
    <property type="match status" value="1"/>
</dbReference>
<dbReference type="PANTHER" id="PTHR46832">
    <property type="entry name" value="5'-METHYLTHIOADENOSINE/S-ADENOSYLHOMOCYSTEINE NUCLEOSIDASE"/>
    <property type="match status" value="1"/>
</dbReference>
<dbReference type="PANTHER" id="PTHR46832:SF1">
    <property type="entry name" value="5'-METHYLTHIOADENOSINE_S-ADENOSYLHOMOCYSTEINE NUCLEOSIDASE"/>
    <property type="match status" value="1"/>
</dbReference>
<dbReference type="Pfam" id="PF01048">
    <property type="entry name" value="PNP_UDP_1"/>
    <property type="match status" value="1"/>
</dbReference>
<dbReference type="SUPFAM" id="SSF53167">
    <property type="entry name" value="Purine and uridine phosphorylases"/>
    <property type="match status" value="1"/>
</dbReference>
<proteinExistence type="inferred from homology"/>
<protein>
    <recommendedName>
        <fullName evidence="1">5'-methylthioadenosine/S-adenosylhomocysteine nucleosidase</fullName>
        <shortName evidence="1">MTA/SAH nucleosidase</shortName>
        <shortName evidence="1">MTAN</shortName>
        <ecNumber evidence="1">3.2.2.9</ecNumber>
    </recommendedName>
    <alternativeName>
        <fullName evidence="1">5'-deoxyadenosine nucleosidase</fullName>
        <shortName evidence="1">DOA nucleosidase</shortName>
        <shortName evidence="1">dAdo nucleosidase</shortName>
    </alternativeName>
    <alternativeName>
        <fullName evidence="1">5'-methylthioadenosine nucleosidase</fullName>
        <shortName evidence="1">MTA nucleosidase</shortName>
    </alternativeName>
    <alternativeName>
        <fullName evidence="1">S-adenosylhomocysteine nucleosidase</fullName>
        <shortName evidence="1">AdoHcy nucleosidase</shortName>
        <shortName evidence="1">SAH nucleosidase</shortName>
        <shortName evidence="1">SRH nucleosidase</shortName>
    </alternativeName>
</protein>
<feature type="chain" id="PRO_0000359290" description="5'-methylthioadenosine/S-adenosylhomocysteine nucleosidase">
    <location>
        <begin position="1"/>
        <end position="232"/>
    </location>
</feature>
<feature type="active site" description="Proton acceptor" evidence="1">
    <location>
        <position position="12"/>
    </location>
</feature>
<feature type="active site" description="Proton donor" evidence="1">
    <location>
        <position position="197"/>
    </location>
</feature>
<feature type="binding site" evidence="1">
    <location>
        <position position="78"/>
    </location>
    <ligand>
        <name>substrate</name>
    </ligand>
</feature>
<feature type="binding site" evidence="1">
    <location>
        <position position="152"/>
    </location>
    <ligand>
        <name>substrate</name>
    </ligand>
</feature>
<feature type="binding site" evidence="1">
    <location>
        <begin position="173"/>
        <end position="174"/>
    </location>
    <ligand>
        <name>substrate</name>
    </ligand>
</feature>
<gene>
    <name evidence="1" type="primary">mtnN</name>
    <name type="ordered locus">Ent638_0699</name>
</gene>
<evidence type="ECO:0000255" key="1">
    <source>
        <dbReference type="HAMAP-Rule" id="MF_01684"/>
    </source>
</evidence>